<dbReference type="EMBL" id="AE016825">
    <property type="protein sequence ID" value="AAQ61833.1"/>
    <property type="molecule type" value="Genomic_DNA"/>
</dbReference>
<dbReference type="RefSeq" id="WP_011137720.1">
    <property type="nucleotide sequence ID" value="NC_005085.1"/>
</dbReference>
<dbReference type="SMR" id="Q7NQG5"/>
<dbReference type="STRING" id="243365.CV_4173"/>
<dbReference type="GeneID" id="97477828"/>
<dbReference type="KEGG" id="cvi:CV_4173"/>
<dbReference type="eggNOG" id="COG0199">
    <property type="taxonomic scope" value="Bacteria"/>
</dbReference>
<dbReference type="HOGENOM" id="CLU_139869_0_1_4"/>
<dbReference type="OrthoDB" id="9810484at2"/>
<dbReference type="Proteomes" id="UP000001424">
    <property type="component" value="Chromosome"/>
</dbReference>
<dbReference type="GO" id="GO:0005737">
    <property type="term" value="C:cytoplasm"/>
    <property type="evidence" value="ECO:0007669"/>
    <property type="project" value="UniProtKB-ARBA"/>
</dbReference>
<dbReference type="GO" id="GO:0015935">
    <property type="term" value="C:small ribosomal subunit"/>
    <property type="evidence" value="ECO:0007669"/>
    <property type="project" value="TreeGrafter"/>
</dbReference>
<dbReference type="GO" id="GO:0019843">
    <property type="term" value="F:rRNA binding"/>
    <property type="evidence" value="ECO:0007669"/>
    <property type="project" value="UniProtKB-UniRule"/>
</dbReference>
<dbReference type="GO" id="GO:0003735">
    <property type="term" value="F:structural constituent of ribosome"/>
    <property type="evidence" value="ECO:0007669"/>
    <property type="project" value="InterPro"/>
</dbReference>
<dbReference type="GO" id="GO:0006412">
    <property type="term" value="P:translation"/>
    <property type="evidence" value="ECO:0007669"/>
    <property type="project" value="UniProtKB-UniRule"/>
</dbReference>
<dbReference type="FunFam" id="1.10.287.1480:FF:000001">
    <property type="entry name" value="30S ribosomal protein S14"/>
    <property type="match status" value="1"/>
</dbReference>
<dbReference type="Gene3D" id="1.10.287.1480">
    <property type="match status" value="1"/>
</dbReference>
<dbReference type="HAMAP" id="MF_00537">
    <property type="entry name" value="Ribosomal_uS14_1"/>
    <property type="match status" value="1"/>
</dbReference>
<dbReference type="InterPro" id="IPR001209">
    <property type="entry name" value="Ribosomal_uS14"/>
</dbReference>
<dbReference type="InterPro" id="IPR023036">
    <property type="entry name" value="Ribosomal_uS14_bac/plastid"/>
</dbReference>
<dbReference type="NCBIfam" id="NF006477">
    <property type="entry name" value="PRK08881.1"/>
    <property type="match status" value="1"/>
</dbReference>
<dbReference type="PANTHER" id="PTHR19836">
    <property type="entry name" value="30S RIBOSOMAL PROTEIN S14"/>
    <property type="match status" value="1"/>
</dbReference>
<dbReference type="PANTHER" id="PTHR19836:SF19">
    <property type="entry name" value="SMALL RIBOSOMAL SUBUNIT PROTEIN US14M"/>
    <property type="match status" value="1"/>
</dbReference>
<dbReference type="Pfam" id="PF00253">
    <property type="entry name" value="Ribosomal_S14"/>
    <property type="match status" value="1"/>
</dbReference>
<dbReference type="SUPFAM" id="SSF57716">
    <property type="entry name" value="Glucocorticoid receptor-like (DNA-binding domain)"/>
    <property type="match status" value="1"/>
</dbReference>
<feature type="chain" id="PRO_1000128363" description="Small ribosomal subunit protein uS14">
    <location>
        <begin position="1"/>
        <end position="101"/>
    </location>
</feature>
<reference key="1">
    <citation type="journal article" date="2003" name="Proc. Natl. Acad. Sci. U.S.A.">
        <title>The complete genome sequence of Chromobacterium violaceum reveals remarkable and exploitable bacterial adaptability.</title>
        <authorList>
            <person name="Vasconcelos A.T.R."/>
            <person name="de Almeida D.F."/>
            <person name="Hungria M."/>
            <person name="Guimaraes C.T."/>
            <person name="Antonio R.V."/>
            <person name="Almeida F.C."/>
            <person name="de Almeida L.G.P."/>
            <person name="de Almeida R."/>
            <person name="Alves-Gomes J.A."/>
            <person name="Andrade E.M."/>
            <person name="Araripe J."/>
            <person name="de Araujo M.F.F."/>
            <person name="Astolfi-Filho S."/>
            <person name="Azevedo V."/>
            <person name="Baptista A.J."/>
            <person name="Bataus L.A.M."/>
            <person name="Batista J.S."/>
            <person name="Belo A."/>
            <person name="van den Berg C."/>
            <person name="Bogo M."/>
            <person name="Bonatto S."/>
            <person name="Bordignon J."/>
            <person name="Brigido M.M."/>
            <person name="Brito C.A."/>
            <person name="Brocchi M."/>
            <person name="Burity H.A."/>
            <person name="Camargo A.A."/>
            <person name="Cardoso D.D.P."/>
            <person name="Carneiro N.P."/>
            <person name="Carraro D.M."/>
            <person name="Carvalho C.M.B."/>
            <person name="Cascardo J.C.M."/>
            <person name="Cavada B.S."/>
            <person name="Chueire L.M.O."/>
            <person name="Creczynski-Pasa T.B."/>
            <person name="Cunha-Junior N.C."/>
            <person name="Fagundes N."/>
            <person name="Falcao C.L."/>
            <person name="Fantinatti F."/>
            <person name="Farias I.P."/>
            <person name="Felipe M.S.S."/>
            <person name="Ferrari L.P."/>
            <person name="Ferro J.A."/>
            <person name="Ferro M.I.T."/>
            <person name="Franco G.R."/>
            <person name="Freitas N.S.A."/>
            <person name="Furlan L.R."/>
            <person name="Gazzinelli R.T."/>
            <person name="Gomes E.A."/>
            <person name="Goncalves P.R."/>
            <person name="Grangeiro T.B."/>
            <person name="Grattapaglia D."/>
            <person name="Grisard E.C."/>
            <person name="Hanna E.S."/>
            <person name="Jardim S.N."/>
            <person name="Laurino J."/>
            <person name="Leoi L.C.T."/>
            <person name="Lima L.F.A."/>
            <person name="Loureiro M.F."/>
            <person name="Lyra M.C.C.P."/>
            <person name="Madeira H.M.F."/>
            <person name="Manfio G.P."/>
            <person name="Maranhao A.Q."/>
            <person name="Martins W.S."/>
            <person name="di Mauro S.M.Z."/>
            <person name="de Medeiros S.R.B."/>
            <person name="Meissner R.V."/>
            <person name="Moreira M.A.M."/>
            <person name="Nascimento F.F."/>
            <person name="Nicolas M.F."/>
            <person name="Oliveira J.G."/>
            <person name="Oliveira S.C."/>
            <person name="Paixao R.F.C."/>
            <person name="Parente J.A."/>
            <person name="Pedrosa F.O."/>
            <person name="Pena S.D.J."/>
            <person name="Pereira J.O."/>
            <person name="Pereira M."/>
            <person name="Pinto L.S.R.C."/>
            <person name="Pinto L.S."/>
            <person name="Porto J.I.R."/>
            <person name="Potrich D.P."/>
            <person name="Ramalho-Neto C.E."/>
            <person name="Reis A.M.M."/>
            <person name="Rigo L.U."/>
            <person name="Rondinelli E."/>
            <person name="Santos E.B.P."/>
            <person name="Santos F.R."/>
            <person name="Schneider M.P.C."/>
            <person name="Seuanez H.N."/>
            <person name="Silva A.M.R."/>
            <person name="da Silva A.L.C."/>
            <person name="Silva D.W."/>
            <person name="Silva R."/>
            <person name="Simoes I.C."/>
            <person name="Simon D."/>
            <person name="Soares C.M.A."/>
            <person name="Soares R.B.A."/>
            <person name="Souza E.M."/>
            <person name="Souza K.R.L."/>
            <person name="Souza R.C."/>
            <person name="Steffens M.B.R."/>
            <person name="Steindel M."/>
            <person name="Teixeira S.R."/>
            <person name="Urmenyi T."/>
            <person name="Vettore A."/>
            <person name="Wassem R."/>
            <person name="Zaha A."/>
            <person name="Simpson A.J.G."/>
        </authorList>
    </citation>
    <scope>NUCLEOTIDE SEQUENCE [LARGE SCALE GENOMIC DNA]</scope>
    <source>
        <strain>ATCC 12472 / DSM 30191 / JCM 1249 / CCUG 213 / NBRC 12614 / NCIMB 9131 / NCTC 9757 / MK</strain>
    </source>
</reference>
<sequence>MARLALINREEKRVKLAEKFSAKREALIATINNQNLSEEERFAARLQLQQLPRNASPVRQRRRCAVTGRPRGVFRKFGLGRNKLREIAMKGEIPGVVKASW</sequence>
<keyword id="KW-1185">Reference proteome</keyword>
<keyword id="KW-0687">Ribonucleoprotein</keyword>
<keyword id="KW-0689">Ribosomal protein</keyword>
<keyword id="KW-0694">RNA-binding</keyword>
<keyword id="KW-0699">rRNA-binding</keyword>
<comment type="function">
    <text evidence="1">Binds 16S rRNA, required for the assembly of 30S particles and may also be responsible for determining the conformation of the 16S rRNA at the A site.</text>
</comment>
<comment type="subunit">
    <text evidence="1">Part of the 30S ribosomal subunit. Contacts proteins S3 and S10.</text>
</comment>
<comment type="similarity">
    <text evidence="1">Belongs to the universal ribosomal protein uS14 family.</text>
</comment>
<protein>
    <recommendedName>
        <fullName evidence="1">Small ribosomal subunit protein uS14</fullName>
    </recommendedName>
    <alternativeName>
        <fullName evidence="2">30S ribosomal protein S14</fullName>
    </alternativeName>
</protein>
<organism>
    <name type="scientific">Chromobacterium violaceum (strain ATCC 12472 / DSM 30191 / JCM 1249 / CCUG 213 / NBRC 12614 / NCIMB 9131 / NCTC 9757 / MK)</name>
    <dbReference type="NCBI Taxonomy" id="243365"/>
    <lineage>
        <taxon>Bacteria</taxon>
        <taxon>Pseudomonadati</taxon>
        <taxon>Pseudomonadota</taxon>
        <taxon>Betaproteobacteria</taxon>
        <taxon>Neisseriales</taxon>
        <taxon>Chromobacteriaceae</taxon>
        <taxon>Chromobacterium</taxon>
    </lineage>
</organism>
<evidence type="ECO:0000255" key="1">
    <source>
        <dbReference type="HAMAP-Rule" id="MF_00537"/>
    </source>
</evidence>
<evidence type="ECO:0000305" key="2"/>
<accession>Q7NQG5</accession>
<name>RS14_CHRVO</name>
<proteinExistence type="inferred from homology"/>
<gene>
    <name evidence="1" type="primary">rpsN</name>
    <name type="ordered locus">CV_4173</name>
</gene>